<proteinExistence type="inferred from homology"/>
<reference key="1">
    <citation type="journal article" date="2008" name="PLoS Genet.">
        <title>Complete genome sequence of the N2-fixing broad host range endophyte Klebsiella pneumoniae 342 and virulence predictions verified in mice.</title>
        <authorList>
            <person name="Fouts D.E."/>
            <person name="Tyler H.L."/>
            <person name="DeBoy R.T."/>
            <person name="Daugherty S."/>
            <person name="Ren Q."/>
            <person name="Badger J.H."/>
            <person name="Durkin A.S."/>
            <person name="Huot H."/>
            <person name="Shrivastava S."/>
            <person name="Kothari S."/>
            <person name="Dodson R.J."/>
            <person name="Mohamoud Y."/>
            <person name="Khouri H."/>
            <person name="Roesch L.F.W."/>
            <person name="Krogfelt K.A."/>
            <person name="Struve C."/>
            <person name="Triplett E.W."/>
            <person name="Methe B.A."/>
        </authorList>
    </citation>
    <scope>NUCLEOTIDE SEQUENCE [LARGE SCALE GENOMIC DNA]</scope>
    <source>
        <strain>342</strain>
    </source>
</reference>
<evidence type="ECO:0000255" key="1">
    <source>
        <dbReference type="HAMAP-Rule" id="MF_01559"/>
    </source>
</evidence>
<organism>
    <name type="scientific">Klebsiella pneumoniae (strain 342)</name>
    <dbReference type="NCBI Taxonomy" id="507522"/>
    <lineage>
        <taxon>Bacteria</taxon>
        <taxon>Pseudomonadati</taxon>
        <taxon>Pseudomonadota</taxon>
        <taxon>Gammaproteobacteria</taxon>
        <taxon>Enterobacterales</taxon>
        <taxon>Enterobacteriaceae</taxon>
        <taxon>Klebsiella/Raoultella group</taxon>
        <taxon>Klebsiella</taxon>
        <taxon>Klebsiella pneumoniae complex</taxon>
    </lineage>
</organism>
<name>LLDD_KLEP3</name>
<feature type="chain" id="PRO_0000383432" description="L-lactate dehydrogenase">
    <location>
        <begin position="1"/>
        <end position="394"/>
    </location>
</feature>
<feature type="domain" description="FMN hydroxy acid dehydrogenase" evidence="1">
    <location>
        <begin position="1"/>
        <end position="380"/>
    </location>
</feature>
<feature type="active site" description="Proton acceptor" evidence="1">
    <location>
        <position position="275"/>
    </location>
</feature>
<feature type="binding site" evidence="1">
    <location>
        <position position="24"/>
    </location>
    <ligand>
        <name>substrate</name>
    </ligand>
</feature>
<feature type="binding site" evidence="1">
    <location>
        <position position="106"/>
    </location>
    <ligand>
        <name>FMN</name>
        <dbReference type="ChEBI" id="CHEBI:58210"/>
    </ligand>
</feature>
<feature type="binding site" evidence="1">
    <location>
        <position position="127"/>
    </location>
    <ligand>
        <name>FMN</name>
        <dbReference type="ChEBI" id="CHEBI:58210"/>
    </ligand>
</feature>
<feature type="binding site" evidence="1">
    <location>
        <position position="129"/>
    </location>
    <ligand>
        <name>substrate</name>
    </ligand>
</feature>
<feature type="binding site" evidence="1">
    <location>
        <position position="155"/>
    </location>
    <ligand>
        <name>FMN</name>
        <dbReference type="ChEBI" id="CHEBI:58210"/>
    </ligand>
</feature>
<feature type="binding site" evidence="1">
    <location>
        <position position="164"/>
    </location>
    <ligand>
        <name>substrate</name>
    </ligand>
</feature>
<feature type="binding site" evidence="1">
    <location>
        <position position="251"/>
    </location>
    <ligand>
        <name>FMN</name>
        <dbReference type="ChEBI" id="CHEBI:58210"/>
    </ligand>
</feature>
<feature type="binding site" evidence="1">
    <location>
        <position position="278"/>
    </location>
    <ligand>
        <name>substrate</name>
    </ligand>
</feature>
<feature type="binding site" evidence="1">
    <location>
        <begin position="306"/>
        <end position="330"/>
    </location>
    <ligand>
        <name>FMN</name>
        <dbReference type="ChEBI" id="CHEBI:58210"/>
    </ligand>
</feature>
<accession>B5XMV0</accession>
<comment type="function">
    <text evidence="1">Catalyzes the conversion of L-lactate to pyruvate. Is coupled to the respiratory chain.</text>
</comment>
<comment type="catalytic activity">
    <reaction evidence="1">
        <text>(S)-lactate + A = pyruvate + AH2</text>
        <dbReference type="Rhea" id="RHEA:45816"/>
        <dbReference type="ChEBI" id="CHEBI:13193"/>
        <dbReference type="ChEBI" id="CHEBI:15361"/>
        <dbReference type="ChEBI" id="CHEBI:16651"/>
        <dbReference type="ChEBI" id="CHEBI:17499"/>
    </reaction>
</comment>
<comment type="cofactor">
    <cofactor evidence="1">
        <name>FMN</name>
        <dbReference type="ChEBI" id="CHEBI:58210"/>
    </cofactor>
</comment>
<comment type="subcellular location">
    <subcellularLocation>
        <location evidence="1">Cell inner membrane</location>
        <topology evidence="1">Peripheral membrane protein</topology>
    </subcellularLocation>
</comment>
<comment type="similarity">
    <text evidence="1">Belongs to the FMN-dependent alpha-hydroxy acid dehydrogenase family.</text>
</comment>
<dbReference type="EC" id="1.1.-.-" evidence="1"/>
<dbReference type="EMBL" id="CP000964">
    <property type="protein sequence ID" value="ACI08468.1"/>
    <property type="molecule type" value="Genomic_DNA"/>
</dbReference>
<dbReference type="SMR" id="B5XMV0"/>
<dbReference type="KEGG" id="kpe:KPK_0146"/>
<dbReference type="HOGENOM" id="CLU_020639_0_0_6"/>
<dbReference type="Proteomes" id="UP000001734">
    <property type="component" value="Chromosome"/>
</dbReference>
<dbReference type="GO" id="GO:0005886">
    <property type="term" value="C:plasma membrane"/>
    <property type="evidence" value="ECO:0007669"/>
    <property type="project" value="UniProtKB-SubCell"/>
</dbReference>
<dbReference type="GO" id="GO:0010181">
    <property type="term" value="F:FMN binding"/>
    <property type="evidence" value="ECO:0007669"/>
    <property type="project" value="InterPro"/>
</dbReference>
<dbReference type="GO" id="GO:0004459">
    <property type="term" value="F:L-lactate dehydrogenase activity"/>
    <property type="evidence" value="ECO:0007669"/>
    <property type="project" value="UniProtKB-UniRule"/>
</dbReference>
<dbReference type="GO" id="GO:0009060">
    <property type="term" value="P:aerobic respiration"/>
    <property type="evidence" value="ECO:0007669"/>
    <property type="project" value="TreeGrafter"/>
</dbReference>
<dbReference type="GO" id="GO:0006089">
    <property type="term" value="P:lactate metabolic process"/>
    <property type="evidence" value="ECO:0007669"/>
    <property type="project" value="UniProtKB-UniRule"/>
</dbReference>
<dbReference type="CDD" id="cd02809">
    <property type="entry name" value="alpha_hydroxyacid_oxid_FMN"/>
    <property type="match status" value="1"/>
</dbReference>
<dbReference type="FunFam" id="3.20.20.70:FF:000029">
    <property type="entry name" value="L-lactate dehydrogenase"/>
    <property type="match status" value="1"/>
</dbReference>
<dbReference type="Gene3D" id="3.20.20.70">
    <property type="entry name" value="Aldolase class I"/>
    <property type="match status" value="1"/>
</dbReference>
<dbReference type="HAMAP" id="MF_01559">
    <property type="entry name" value="L_lact_dehydr"/>
    <property type="match status" value="1"/>
</dbReference>
<dbReference type="InterPro" id="IPR013785">
    <property type="entry name" value="Aldolase_TIM"/>
</dbReference>
<dbReference type="InterPro" id="IPR012133">
    <property type="entry name" value="Alpha-hydoxy_acid_DH_FMN"/>
</dbReference>
<dbReference type="InterPro" id="IPR000262">
    <property type="entry name" value="FMN-dep_DH"/>
</dbReference>
<dbReference type="InterPro" id="IPR037396">
    <property type="entry name" value="FMN_HAD"/>
</dbReference>
<dbReference type="InterPro" id="IPR008259">
    <property type="entry name" value="FMN_hydac_DH_AS"/>
</dbReference>
<dbReference type="InterPro" id="IPR020920">
    <property type="entry name" value="LldD"/>
</dbReference>
<dbReference type="NCBIfam" id="NF033901">
    <property type="entry name" value="L_lactate_LldD"/>
    <property type="match status" value="1"/>
</dbReference>
<dbReference type="NCBIfam" id="NF008398">
    <property type="entry name" value="PRK11197.1"/>
    <property type="match status" value="1"/>
</dbReference>
<dbReference type="PANTHER" id="PTHR10578:SF85">
    <property type="entry name" value="L-LACTATE DEHYDROGENASE"/>
    <property type="match status" value="1"/>
</dbReference>
<dbReference type="PANTHER" id="PTHR10578">
    <property type="entry name" value="S -2-HYDROXY-ACID OXIDASE-RELATED"/>
    <property type="match status" value="1"/>
</dbReference>
<dbReference type="Pfam" id="PF01070">
    <property type="entry name" value="FMN_dh"/>
    <property type="match status" value="1"/>
</dbReference>
<dbReference type="PIRSF" id="PIRSF000138">
    <property type="entry name" value="Al-hdrx_acd_dh"/>
    <property type="match status" value="1"/>
</dbReference>
<dbReference type="SUPFAM" id="SSF51395">
    <property type="entry name" value="FMN-linked oxidoreductases"/>
    <property type="match status" value="1"/>
</dbReference>
<dbReference type="PROSITE" id="PS00557">
    <property type="entry name" value="FMN_HYDROXY_ACID_DH_1"/>
    <property type="match status" value="1"/>
</dbReference>
<dbReference type="PROSITE" id="PS51349">
    <property type="entry name" value="FMN_HYDROXY_ACID_DH_2"/>
    <property type="match status" value="1"/>
</dbReference>
<protein>
    <recommendedName>
        <fullName evidence="1">L-lactate dehydrogenase</fullName>
        <ecNumber evidence="1">1.1.-.-</ecNumber>
    </recommendedName>
</protein>
<keyword id="KW-0997">Cell inner membrane</keyword>
<keyword id="KW-1003">Cell membrane</keyword>
<keyword id="KW-0285">Flavoprotein</keyword>
<keyword id="KW-0288">FMN</keyword>
<keyword id="KW-0472">Membrane</keyword>
<keyword id="KW-0560">Oxidoreductase</keyword>
<sequence>MIISAASDYRAAAQRILPPFLFHYIDGGAYAEHTLRRNVEDLSDVALRQRILRNMSDLSLETTLFNEKLAMPTALAPVGLCGMYARRGEVQAAGAADDKGIPFTLSTVSVCPIEEVAPTIKRPMWFQLYVLRDRGFMRNALERAKAAGCSTLVFTVDMPTPGARYRDAHSGMSGPNAALRRYWQAVTHPQWAWDVGLNGRPHDLGNISAYLGQPTGLEDYIGWLANNFDPSISWKDLEWIRDFWDGPMVIKGILDPEDARDAVRFGADGIVVSNHGGRQLDGVLSSARALPAIADAVKGDITILADSGIRNGLDVVRMIALGADSVLLGRAYLYALATHGKQGVANLLNLIEKEMKVAMTLTGAKTIREISRDSLVQNAEALQTFDALKQNNAA</sequence>
<gene>
    <name evidence="1" type="primary">lldD</name>
    <name type="ordered locus">KPK_0146</name>
</gene>